<organism>
    <name type="scientific">Cupiennius salei</name>
    <name type="common">American wandering spider</name>
    <dbReference type="NCBI Taxonomy" id="6928"/>
    <lineage>
        <taxon>Eukaryota</taxon>
        <taxon>Metazoa</taxon>
        <taxon>Ecdysozoa</taxon>
        <taxon>Arthropoda</taxon>
        <taxon>Chelicerata</taxon>
        <taxon>Arachnida</taxon>
        <taxon>Araneae</taxon>
        <taxon>Araneomorphae</taxon>
        <taxon>Entelegynae</taxon>
        <taxon>Lycosoidea</taxon>
        <taxon>Ctenidae</taxon>
        <taxon>Cupiennius</taxon>
    </lineage>
</organism>
<accession>B3EWW3</accession>
<feature type="peptide" id="PRO_0000421222" description="Cupiennin-7a" evidence="1">
    <location>
        <begin position="1"/>
        <end position="17"/>
    </location>
</feature>
<feature type="modified residue" description="Threonine amide" evidence="1">
    <location>
        <position position="17"/>
    </location>
</feature>
<sequence length="17" mass="2076">DLLTTIKRVKESMKRRT</sequence>
<keyword id="KW-0027">Amidation</keyword>
<keyword id="KW-0903">Direct protein sequencing</keyword>
<keyword id="KW-0964">Secreted</keyword>
<keyword id="KW-0800">Toxin</keyword>
<name>TXC7A_CUPSA</name>
<protein>
    <recommendedName>
        <fullName evidence="3">Cupiennin-7a</fullName>
        <shortName evidence="3">Cu-7a</shortName>
    </recommendedName>
    <alternativeName>
        <fullName evidence="2">Short cationic peptide-5a</fullName>
        <shortName evidence="2">SCP-5a</shortName>
    </alternativeName>
</protein>
<dbReference type="GO" id="GO:0005576">
    <property type="term" value="C:extracellular region"/>
    <property type="evidence" value="ECO:0007669"/>
    <property type="project" value="UniProtKB-SubCell"/>
</dbReference>
<dbReference type="GO" id="GO:0090729">
    <property type="term" value="F:toxin activity"/>
    <property type="evidence" value="ECO:0007669"/>
    <property type="project" value="UniProtKB-KW"/>
</dbReference>
<comment type="subcellular location">
    <subcellularLocation>
        <location evidence="1">Secreted</location>
    </subcellularLocation>
</comment>
<comment type="tissue specificity">
    <text evidence="5">Expressed by the venom gland.</text>
</comment>
<comment type="mass spectrometry" mass="2073.217" method="Electrospray" evidence="1"/>
<comment type="similarity">
    <text evidence="4">Belongs to the cationic peptide 04 (cupiennin) family. 07 subfamily.</text>
</comment>
<proteinExistence type="evidence at protein level"/>
<evidence type="ECO:0000269" key="1">
    <source>
    </source>
</evidence>
<evidence type="ECO:0000303" key="2">
    <source>
    </source>
</evidence>
<evidence type="ECO:0000303" key="3">
    <source ref="2"/>
</evidence>
<evidence type="ECO:0000305" key="4"/>
<evidence type="ECO:0000305" key="5">
    <source>
    </source>
</evidence>
<reference key="1">
    <citation type="journal article" date="2012" name="FEBS J.">
        <title>Multicomponent venom of the spider Cupiennius salei: a bioanalytical investigation applying different strategies.</title>
        <authorList>
            <person name="Trachsel C."/>
            <person name="Siegemund D."/>
            <person name="Kampfer U."/>
            <person name="Kopp L.S."/>
            <person name="Buhr C."/>
            <person name="Grossmann J."/>
            <person name="Luthi C."/>
            <person name="Cunningham M."/>
            <person name="Nentwig W."/>
            <person name="Kuhn-Nentwig L."/>
            <person name="Schurch S."/>
            <person name="Schaller J."/>
        </authorList>
    </citation>
    <scope>PROTEIN SEQUENCE</scope>
    <scope>MASS SPECTROMETRY</scope>
    <scope>AMIDATION AT THR-17</scope>
    <source>
        <tissue>Venom</tissue>
    </source>
</reference>
<reference key="2">
    <citation type="unpublished observations" date="2015-06">
        <authorList>
            <person name="Kuhn-Nentwig L."/>
            <person name="Gohel T."/>
        </authorList>
    </citation>
    <scope>NOMENCLATURE</scope>
</reference>